<protein>
    <recommendedName>
        <fullName>Hyaluronidase-3</fullName>
        <shortName>Hy-3</shortName>
        <ecNumber>3.2.1.35</ecNumber>
    </recommendedName>
    <alternativeName>
        <fullName>Hyaluronoglucosaminidase-3</fullName>
    </alternativeName>
    <alternativeName>
        <fullName>Venom spreading factor</fullName>
    </alternativeName>
</protein>
<dbReference type="EC" id="3.2.1.35"/>
<dbReference type="EMBL" id="DQ840251">
    <property type="protein sequence ID" value="ABI33939.1"/>
    <property type="molecule type" value="mRNA"/>
</dbReference>
<dbReference type="SMR" id="A3QVN4"/>
<dbReference type="GO" id="GO:0031410">
    <property type="term" value="C:cytoplasmic vesicle"/>
    <property type="evidence" value="ECO:0007669"/>
    <property type="project" value="TreeGrafter"/>
</dbReference>
<dbReference type="GO" id="GO:0005576">
    <property type="term" value="C:extracellular region"/>
    <property type="evidence" value="ECO:0007669"/>
    <property type="project" value="UniProtKB-SubCell"/>
</dbReference>
<dbReference type="GO" id="GO:0004415">
    <property type="term" value="F:hyalurononglucosaminidase activity"/>
    <property type="evidence" value="ECO:0007669"/>
    <property type="project" value="UniProtKB-EC"/>
</dbReference>
<dbReference type="GO" id="GO:0005975">
    <property type="term" value="P:carbohydrate metabolic process"/>
    <property type="evidence" value="ECO:0007669"/>
    <property type="project" value="InterPro"/>
</dbReference>
<dbReference type="GO" id="GO:0030214">
    <property type="term" value="P:hyaluronan catabolic process"/>
    <property type="evidence" value="ECO:0007669"/>
    <property type="project" value="TreeGrafter"/>
</dbReference>
<dbReference type="FunFam" id="3.20.20.70:FF:000065">
    <property type="entry name" value="Hyaluronidase"/>
    <property type="match status" value="1"/>
</dbReference>
<dbReference type="Gene3D" id="3.20.20.70">
    <property type="entry name" value="Aldolase class I"/>
    <property type="match status" value="1"/>
</dbReference>
<dbReference type="InterPro" id="IPR013785">
    <property type="entry name" value="Aldolase_TIM"/>
</dbReference>
<dbReference type="InterPro" id="IPR017853">
    <property type="entry name" value="Glycoside_hydrolase_SF"/>
</dbReference>
<dbReference type="InterPro" id="IPR018155">
    <property type="entry name" value="Hyaluronidase"/>
</dbReference>
<dbReference type="PANTHER" id="PTHR11769">
    <property type="entry name" value="HYALURONIDASE"/>
    <property type="match status" value="1"/>
</dbReference>
<dbReference type="PANTHER" id="PTHR11769:SF9">
    <property type="entry name" value="HYALURONIDASE"/>
    <property type="match status" value="1"/>
</dbReference>
<dbReference type="Pfam" id="PF01630">
    <property type="entry name" value="Glyco_hydro_56"/>
    <property type="match status" value="1"/>
</dbReference>
<dbReference type="PIRSF" id="PIRSF038193">
    <property type="entry name" value="Hyaluronidase"/>
    <property type="match status" value="1"/>
</dbReference>
<dbReference type="PRINTS" id="PR00846">
    <property type="entry name" value="GLHYDRLASE56"/>
</dbReference>
<dbReference type="SUPFAM" id="SSF51445">
    <property type="entry name" value="(Trans)glycosidases"/>
    <property type="match status" value="1"/>
</dbReference>
<dbReference type="PROSITE" id="PS00022">
    <property type="entry name" value="EGF_1"/>
    <property type="match status" value="1"/>
</dbReference>
<dbReference type="PROSITE" id="PS01186">
    <property type="entry name" value="EGF_2"/>
    <property type="match status" value="1"/>
</dbReference>
<accession>A3QVN4</accession>
<comment type="function">
    <text evidence="1">Snake venom endo-hyaluronidase that degrades hyaluronan to smaller oligosaccharide fragments. In venom, it is not toxic by itself, but increases the diffusion of other venom proteins by degrading the extracellular matrix. In addition, it displays antiedematogenic activity (By similarity).</text>
</comment>
<comment type="catalytic activity">
    <reaction>
        <text>Random hydrolysis of (1-&gt;4)-linkages between N-acetyl-beta-D-glucosamine and D-glucuronate residues in hyaluronate.</text>
        <dbReference type="EC" id="3.2.1.35"/>
    </reaction>
</comment>
<comment type="subunit">
    <text evidence="1">Monomer.</text>
</comment>
<comment type="subcellular location">
    <subcellularLocation>
        <location evidence="1">Secreted</location>
    </subcellularLocation>
</comment>
<comment type="tissue specificity">
    <text>Expressed by the venom gland.</text>
</comment>
<comment type="similarity">
    <text evidence="3">Belongs to the glycosyl hydrolase 56 family.</text>
</comment>
<keyword id="KW-1015">Disulfide bond</keyword>
<keyword id="KW-0245">EGF-like domain</keyword>
<keyword id="KW-0325">Glycoprotein</keyword>
<keyword id="KW-0326">Glycosidase</keyword>
<keyword id="KW-0378">Hydrolase</keyword>
<keyword id="KW-0964">Secreted</keyword>
<keyword id="KW-0732">Signal</keyword>
<reference key="1">
    <citation type="journal article" date="2007" name="Gene">
        <title>Identification of cDNAs encoding viper venom hyaluronidases: cross-generic sequence conservation of full-length and unusually short variant transcripts.</title>
        <authorList>
            <person name="Harrison R.A."/>
            <person name="Ibison F."/>
            <person name="Wilbraham D."/>
            <person name="Wagstaff S.C."/>
        </authorList>
    </citation>
    <scope>NUCLEOTIDE SEQUENCE [MRNA]</scope>
    <source>
        <tissue>Venom gland</tissue>
    </source>
</reference>
<name>HYAL3_CERCE</name>
<sequence length="449" mass="52616">MYHIWIKFLAAWIFLKKFNGVHVMQAKAPMYRNEPFLVFWNAPTTQCRLRYKVDLDLKTFHIVSNANDSLSGSAVTIFYPNHLGVYPHIDDRGHFFHGIIPQNESLTKHLNKSKSDINRIIPLKAFHGLGVIDWENWRPQWDRNWGSKNVYRNRSIQFARDLHPELSEDKIRRLAKKEYEKAAKSFMRDTLLLAEEMRPDGYWGYYLYSDCQNYDYKTKGDQYTGKCPEIEMSRNDQLLWLWRDSTALFPNVYLEIILRSSDNALKFVHHRLKEAMRIASMAREDYALPVFAYARPFYAYTFEPLTQEDLVTTVGETAAMGAAGIVFWGSMQYASTVDSCQKVKKYMNGPLGRYIVNVTTAAKICSRVLCRKNGRCVRKHSDSNAFLHLFPESFRIMVYANATEKKVIVKGKLELENLIYLRENFMCQCYQGWKGLYCEEYSIKDIRKI</sequence>
<organism>
    <name type="scientific">Cerastes cerastes</name>
    <name type="common">Horned desert viper</name>
    <dbReference type="NCBI Taxonomy" id="8697"/>
    <lineage>
        <taxon>Eukaryota</taxon>
        <taxon>Metazoa</taxon>
        <taxon>Chordata</taxon>
        <taxon>Craniata</taxon>
        <taxon>Vertebrata</taxon>
        <taxon>Euteleostomi</taxon>
        <taxon>Lepidosauria</taxon>
        <taxon>Squamata</taxon>
        <taxon>Bifurcata</taxon>
        <taxon>Unidentata</taxon>
        <taxon>Episquamata</taxon>
        <taxon>Toxicofera</taxon>
        <taxon>Serpentes</taxon>
        <taxon>Colubroidea</taxon>
        <taxon>Viperidae</taxon>
        <taxon>Viperinae</taxon>
        <taxon>Cerastes</taxon>
    </lineage>
</organism>
<evidence type="ECO:0000250" key="1"/>
<evidence type="ECO:0000255" key="2"/>
<evidence type="ECO:0000305" key="3"/>
<feature type="signal peptide" evidence="1">
    <location>
        <begin position="1"/>
        <end position="23"/>
    </location>
</feature>
<feature type="chain" id="PRO_0000420459" description="Hyaluronidase-3">
    <location>
        <begin position="24"/>
        <end position="449"/>
    </location>
</feature>
<feature type="domain" description="EGF-like">
    <location>
        <begin position="427"/>
        <end position="438"/>
    </location>
</feature>
<feature type="active site" description="Proton donor" evidence="1">
    <location>
        <position position="135"/>
    </location>
</feature>
<feature type="glycosylation site" description="N-linked (GlcNAc...) asparagine" evidence="2">
    <location>
        <position position="67"/>
    </location>
</feature>
<feature type="glycosylation site" description="N-linked (GlcNAc...) asparagine" evidence="2">
    <location>
        <position position="103"/>
    </location>
</feature>
<feature type="glycosylation site" description="N-linked (GlcNAc...) asparagine" evidence="2">
    <location>
        <position position="111"/>
    </location>
</feature>
<feature type="glycosylation site" description="N-linked (GlcNAc...) asparagine" evidence="2">
    <location>
        <position position="153"/>
    </location>
</feature>
<feature type="glycosylation site" description="N-linked (GlcNAc...) asparagine" evidence="2">
    <location>
        <position position="357"/>
    </location>
</feature>
<feature type="glycosylation site" description="N-linked (GlcNAc...) asparagine" evidence="2">
    <location>
        <position position="401"/>
    </location>
</feature>
<feature type="disulfide bond" evidence="1">
    <location>
        <begin position="47"/>
        <end position="340"/>
    </location>
</feature>
<feature type="disulfide bond" evidence="1">
    <location>
        <begin position="211"/>
        <end position="227"/>
    </location>
</feature>
<feature type="disulfide bond" evidence="1">
    <location>
        <begin position="365"/>
        <end position="376"/>
    </location>
</feature>
<feature type="disulfide bond" evidence="1">
    <location>
        <begin position="370"/>
        <end position="427"/>
    </location>
</feature>
<feature type="disulfide bond" evidence="1">
    <location>
        <begin position="429"/>
        <end position="438"/>
    </location>
</feature>
<proteinExistence type="evidence at transcript level"/>